<protein>
    <recommendedName>
        <fullName evidence="1">PKHD-type hydroxylase AB57_0577</fullName>
        <ecNumber evidence="1">1.14.11.-</ecNumber>
    </recommendedName>
</protein>
<keyword id="KW-0223">Dioxygenase</keyword>
<keyword id="KW-0408">Iron</keyword>
<keyword id="KW-0479">Metal-binding</keyword>
<keyword id="KW-0560">Oxidoreductase</keyword>
<keyword id="KW-0847">Vitamin C</keyword>
<evidence type="ECO:0000255" key="1">
    <source>
        <dbReference type="HAMAP-Rule" id="MF_00657"/>
    </source>
</evidence>
<feature type="chain" id="PRO_1000131202" description="PKHD-type hydroxylase AB57_0577">
    <location>
        <begin position="1"/>
        <end position="227"/>
    </location>
</feature>
<feature type="domain" description="Fe2OG dioxygenase" evidence="1">
    <location>
        <begin position="78"/>
        <end position="178"/>
    </location>
</feature>
<feature type="binding site" evidence="1">
    <location>
        <position position="96"/>
    </location>
    <ligand>
        <name>Fe cation</name>
        <dbReference type="ChEBI" id="CHEBI:24875"/>
    </ligand>
</feature>
<feature type="binding site" evidence="1">
    <location>
        <position position="98"/>
    </location>
    <ligand>
        <name>Fe cation</name>
        <dbReference type="ChEBI" id="CHEBI:24875"/>
    </ligand>
</feature>
<feature type="binding site" evidence="1">
    <location>
        <position position="159"/>
    </location>
    <ligand>
        <name>Fe cation</name>
        <dbReference type="ChEBI" id="CHEBI:24875"/>
    </ligand>
</feature>
<feature type="binding site" evidence="1">
    <location>
        <position position="169"/>
    </location>
    <ligand>
        <name>2-oxoglutarate</name>
        <dbReference type="ChEBI" id="CHEBI:16810"/>
    </ligand>
</feature>
<gene>
    <name type="ordered locus">AB57_0577</name>
</gene>
<dbReference type="EC" id="1.14.11.-" evidence="1"/>
<dbReference type="EMBL" id="CP001182">
    <property type="protein sequence ID" value="ACJ39998.1"/>
    <property type="molecule type" value="Genomic_DNA"/>
</dbReference>
<dbReference type="RefSeq" id="WP_001984475.1">
    <property type="nucleotide sequence ID" value="NC_011586.2"/>
</dbReference>
<dbReference type="SMR" id="B7I4X6"/>
<dbReference type="KEGG" id="abn:AB57_0577"/>
<dbReference type="HOGENOM" id="CLU_106663_0_0_6"/>
<dbReference type="Proteomes" id="UP000007094">
    <property type="component" value="Chromosome"/>
</dbReference>
<dbReference type="GO" id="GO:0016706">
    <property type="term" value="F:2-oxoglutarate-dependent dioxygenase activity"/>
    <property type="evidence" value="ECO:0007669"/>
    <property type="project" value="UniProtKB-UniRule"/>
</dbReference>
<dbReference type="GO" id="GO:0005506">
    <property type="term" value="F:iron ion binding"/>
    <property type="evidence" value="ECO:0007669"/>
    <property type="project" value="UniProtKB-UniRule"/>
</dbReference>
<dbReference type="GO" id="GO:0031418">
    <property type="term" value="F:L-ascorbic acid binding"/>
    <property type="evidence" value="ECO:0007669"/>
    <property type="project" value="UniProtKB-KW"/>
</dbReference>
<dbReference type="GO" id="GO:0006974">
    <property type="term" value="P:DNA damage response"/>
    <property type="evidence" value="ECO:0007669"/>
    <property type="project" value="TreeGrafter"/>
</dbReference>
<dbReference type="GO" id="GO:0006879">
    <property type="term" value="P:intracellular iron ion homeostasis"/>
    <property type="evidence" value="ECO:0007669"/>
    <property type="project" value="TreeGrafter"/>
</dbReference>
<dbReference type="Gene3D" id="2.60.120.620">
    <property type="entry name" value="q2cbj1_9rhob like domain"/>
    <property type="match status" value="1"/>
</dbReference>
<dbReference type="Gene3D" id="4.10.860.20">
    <property type="entry name" value="Rabenosyn, Rab binding domain"/>
    <property type="match status" value="1"/>
</dbReference>
<dbReference type="HAMAP" id="MF_00657">
    <property type="entry name" value="Hydroxyl_YbiX"/>
    <property type="match status" value="1"/>
</dbReference>
<dbReference type="InterPro" id="IPR005123">
    <property type="entry name" value="Oxoglu/Fe-dep_dioxygenase_dom"/>
</dbReference>
<dbReference type="InterPro" id="IPR041097">
    <property type="entry name" value="PKHD_C"/>
</dbReference>
<dbReference type="InterPro" id="IPR023550">
    <property type="entry name" value="PKHD_hydroxylase"/>
</dbReference>
<dbReference type="InterPro" id="IPR006620">
    <property type="entry name" value="Pro_4_hyd_alph"/>
</dbReference>
<dbReference type="InterPro" id="IPR044862">
    <property type="entry name" value="Pro_4_hyd_alph_FE2OG_OXY"/>
</dbReference>
<dbReference type="NCBIfam" id="NF003973">
    <property type="entry name" value="PRK05467.1-2"/>
    <property type="match status" value="1"/>
</dbReference>
<dbReference type="NCBIfam" id="NF003974">
    <property type="entry name" value="PRK05467.1-3"/>
    <property type="match status" value="1"/>
</dbReference>
<dbReference type="NCBIfam" id="NF003975">
    <property type="entry name" value="PRK05467.1-4"/>
    <property type="match status" value="1"/>
</dbReference>
<dbReference type="PANTHER" id="PTHR41536">
    <property type="entry name" value="PKHD-TYPE HYDROXYLASE YBIX"/>
    <property type="match status" value="1"/>
</dbReference>
<dbReference type="PANTHER" id="PTHR41536:SF1">
    <property type="entry name" value="PKHD-TYPE HYDROXYLASE YBIX"/>
    <property type="match status" value="1"/>
</dbReference>
<dbReference type="Pfam" id="PF13640">
    <property type="entry name" value="2OG-FeII_Oxy_3"/>
    <property type="match status" value="1"/>
</dbReference>
<dbReference type="Pfam" id="PF18331">
    <property type="entry name" value="PKHD_C"/>
    <property type="match status" value="1"/>
</dbReference>
<dbReference type="SMART" id="SM00702">
    <property type="entry name" value="P4Hc"/>
    <property type="match status" value="1"/>
</dbReference>
<dbReference type="SUPFAM" id="SSF51197">
    <property type="entry name" value="Clavaminate synthase-like"/>
    <property type="match status" value="1"/>
</dbReference>
<dbReference type="PROSITE" id="PS51471">
    <property type="entry name" value="FE2OG_OXY"/>
    <property type="match status" value="1"/>
</dbReference>
<reference key="1">
    <citation type="journal article" date="2008" name="J. Bacteriol.">
        <title>Comparative genome sequence analysis of multidrug-resistant Acinetobacter baumannii.</title>
        <authorList>
            <person name="Adams M.D."/>
            <person name="Goglin K."/>
            <person name="Molyneaux N."/>
            <person name="Hujer K.M."/>
            <person name="Lavender H."/>
            <person name="Jamison J.J."/>
            <person name="MacDonald I.J."/>
            <person name="Martin K.M."/>
            <person name="Russo T."/>
            <person name="Campagnari A.A."/>
            <person name="Hujer A.M."/>
            <person name="Bonomo R.A."/>
            <person name="Gill S.R."/>
        </authorList>
    </citation>
    <scope>NUCLEOTIDE SEQUENCE [LARGE SCALE GENOMIC DNA]</scope>
    <source>
        <strain>AB0057</strain>
    </source>
</reference>
<name>Y577_ACIB5</name>
<organism>
    <name type="scientific">Acinetobacter baumannii (strain AB0057)</name>
    <dbReference type="NCBI Taxonomy" id="480119"/>
    <lineage>
        <taxon>Bacteria</taxon>
        <taxon>Pseudomonadati</taxon>
        <taxon>Pseudomonadota</taxon>
        <taxon>Gammaproteobacteria</taxon>
        <taxon>Moraxellales</taxon>
        <taxon>Moraxellaceae</taxon>
        <taxon>Acinetobacter</taxon>
        <taxon>Acinetobacter calcoaceticus/baumannii complex</taxon>
    </lineage>
</organism>
<proteinExistence type="inferred from homology"/>
<comment type="cofactor">
    <cofactor evidence="1">
        <name>Fe(2+)</name>
        <dbReference type="ChEBI" id="CHEBI:29033"/>
    </cofactor>
    <text evidence="1">Binds 1 Fe(2+) ion per subunit.</text>
</comment>
<comment type="cofactor">
    <cofactor evidence="1">
        <name>L-ascorbate</name>
        <dbReference type="ChEBI" id="CHEBI:38290"/>
    </cofactor>
</comment>
<sequence length="227" mass="26169">MIHHIPNVLSKEQVQYFRNEMDKIEWVNGKVTAGTLSATVKRNQQLPEDHPLTHHLSNIILEALGTHPLFLSAAIPLDIIPPLFNRYENQESFGFHVDNSIRRIRGTNERLRTDLSCTLFLSEPEEYEGGDLVVEDTYGYHEVKLPAGDMILYPSTSLHEVTAITSGCRIASFFWVQSMVRDDAERHMLFNLDQTVQNLRMQLGDNHSEVIKLTNLYHNLMRKWAEL</sequence>
<accession>B7I4X6</accession>